<feature type="chain" id="PRO_1000057439" description="Sulfate adenylyltransferase subunit 2">
    <location>
        <begin position="1"/>
        <end position="302"/>
    </location>
</feature>
<reference key="1">
    <citation type="submission" date="2007-09" db="EMBL/GenBank/DDBJ databases">
        <title>Complete sequence of chromosome of Serratia proteamaculans 568.</title>
        <authorList>
            <consortium name="US DOE Joint Genome Institute"/>
            <person name="Copeland A."/>
            <person name="Lucas S."/>
            <person name="Lapidus A."/>
            <person name="Barry K."/>
            <person name="Glavina del Rio T."/>
            <person name="Dalin E."/>
            <person name="Tice H."/>
            <person name="Pitluck S."/>
            <person name="Chain P."/>
            <person name="Malfatti S."/>
            <person name="Shin M."/>
            <person name="Vergez L."/>
            <person name="Schmutz J."/>
            <person name="Larimer F."/>
            <person name="Land M."/>
            <person name="Hauser L."/>
            <person name="Kyrpides N."/>
            <person name="Kim E."/>
            <person name="Taghavi S."/>
            <person name="Newman L."/>
            <person name="Vangronsveld J."/>
            <person name="van der Lelie D."/>
            <person name="Richardson P."/>
        </authorList>
    </citation>
    <scope>NUCLEOTIDE SEQUENCE [LARGE SCALE GENOMIC DNA]</scope>
    <source>
        <strain>568</strain>
    </source>
</reference>
<name>CYSD_SERP5</name>
<comment type="function">
    <text evidence="1">With CysN forms the ATP sulfurylase (ATPS) that catalyzes the adenylation of sulfate producing adenosine 5'-phosphosulfate (APS) and diphosphate, the first enzymatic step in sulfur assimilation pathway. APS synthesis involves the formation of a high-energy phosphoric-sulfuric acid anhydride bond driven by GTP hydrolysis by CysN coupled to ATP hydrolysis by CysD.</text>
</comment>
<comment type="catalytic activity">
    <reaction evidence="1">
        <text>sulfate + ATP + H(+) = adenosine 5'-phosphosulfate + diphosphate</text>
        <dbReference type="Rhea" id="RHEA:18133"/>
        <dbReference type="ChEBI" id="CHEBI:15378"/>
        <dbReference type="ChEBI" id="CHEBI:16189"/>
        <dbReference type="ChEBI" id="CHEBI:30616"/>
        <dbReference type="ChEBI" id="CHEBI:33019"/>
        <dbReference type="ChEBI" id="CHEBI:58243"/>
        <dbReference type="EC" id="2.7.7.4"/>
    </reaction>
</comment>
<comment type="pathway">
    <text evidence="1">Sulfur metabolism; hydrogen sulfide biosynthesis; sulfite from sulfate: step 1/3.</text>
</comment>
<comment type="subunit">
    <text evidence="1">Heterodimer composed of CysD, the smaller subunit, and CysN.</text>
</comment>
<comment type="similarity">
    <text evidence="1">Belongs to the PAPS reductase family. CysD subfamily.</text>
</comment>
<protein>
    <recommendedName>
        <fullName evidence="1">Sulfate adenylyltransferase subunit 2</fullName>
        <ecNumber evidence="1">2.7.7.4</ecNumber>
    </recommendedName>
    <alternativeName>
        <fullName evidence="1">ATP-sulfurylase small subunit</fullName>
    </alternativeName>
    <alternativeName>
        <fullName evidence="1">Sulfate adenylate transferase</fullName>
        <shortName evidence="1">SAT</shortName>
    </alternativeName>
</protein>
<gene>
    <name evidence="1" type="primary">cysD</name>
    <name type="ordered locus">Spro_0818</name>
</gene>
<dbReference type="EC" id="2.7.7.4" evidence="1"/>
<dbReference type="EMBL" id="CP000826">
    <property type="protein sequence ID" value="ABV39924.1"/>
    <property type="molecule type" value="Genomic_DNA"/>
</dbReference>
<dbReference type="SMR" id="A8G9Y4"/>
<dbReference type="STRING" id="399741.Spro_0818"/>
<dbReference type="KEGG" id="spe:Spro_0818"/>
<dbReference type="eggNOG" id="COG0175">
    <property type="taxonomic scope" value="Bacteria"/>
</dbReference>
<dbReference type="HOGENOM" id="CLU_043026_0_0_6"/>
<dbReference type="OrthoDB" id="9772604at2"/>
<dbReference type="UniPathway" id="UPA00140">
    <property type="reaction ID" value="UER00204"/>
</dbReference>
<dbReference type="GO" id="GO:0005524">
    <property type="term" value="F:ATP binding"/>
    <property type="evidence" value="ECO:0007669"/>
    <property type="project" value="UniProtKB-KW"/>
</dbReference>
<dbReference type="GO" id="GO:0004781">
    <property type="term" value="F:sulfate adenylyltransferase (ATP) activity"/>
    <property type="evidence" value="ECO:0007669"/>
    <property type="project" value="UniProtKB-UniRule"/>
</dbReference>
<dbReference type="GO" id="GO:0070814">
    <property type="term" value="P:hydrogen sulfide biosynthetic process"/>
    <property type="evidence" value="ECO:0007669"/>
    <property type="project" value="UniProtKB-UniRule"/>
</dbReference>
<dbReference type="GO" id="GO:0000103">
    <property type="term" value="P:sulfate assimilation"/>
    <property type="evidence" value="ECO:0007669"/>
    <property type="project" value="UniProtKB-UniRule"/>
</dbReference>
<dbReference type="CDD" id="cd23946">
    <property type="entry name" value="Sulfate_adenylyltransferase_2"/>
    <property type="match status" value="1"/>
</dbReference>
<dbReference type="FunFam" id="3.40.50.620:FF:000002">
    <property type="entry name" value="Sulfate adenylyltransferase subunit 2"/>
    <property type="match status" value="1"/>
</dbReference>
<dbReference type="Gene3D" id="3.40.50.620">
    <property type="entry name" value="HUPs"/>
    <property type="match status" value="1"/>
</dbReference>
<dbReference type="HAMAP" id="MF_00064">
    <property type="entry name" value="Sulf_adenylyltr_sub2"/>
    <property type="match status" value="1"/>
</dbReference>
<dbReference type="InterPro" id="IPR002500">
    <property type="entry name" value="PAPS_reduct_dom"/>
</dbReference>
<dbReference type="InterPro" id="IPR014729">
    <property type="entry name" value="Rossmann-like_a/b/a_fold"/>
</dbReference>
<dbReference type="InterPro" id="IPR011784">
    <property type="entry name" value="SO4_adenylTrfase_ssu"/>
</dbReference>
<dbReference type="InterPro" id="IPR050128">
    <property type="entry name" value="Sulfate_adenylyltrnsfr_sub2"/>
</dbReference>
<dbReference type="NCBIfam" id="TIGR02039">
    <property type="entry name" value="CysD"/>
    <property type="match status" value="1"/>
</dbReference>
<dbReference type="NCBIfam" id="NF003587">
    <property type="entry name" value="PRK05253.1"/>
    <property type="match status" value="1"/>
</dbReference>
<dbReference type="NCBIfam" id="NF009214">
    <property type="entry name" value="PRK12563.1"/>
    <property type="match status" value="1"/>
</dbReference>
<dbReference type="PANTHER" id="PTHR43196">
    <property type="entry name" value="SULFATE ADENYLYLTRANSFERASE SUBUNIT 2"/>
    <property type="match status" value="1"/>
</dbReference>
<dbReference type="PANTHER" id="PTHR43196:SF1">
    <property type="entry name" value="SULFATE ADENYLYLTRANSFERASE SUBUNIT 2"/>
    <property type="match status" value="1"/>
</dbReference>
<dbReference type="Pfam" id="PF01507">
    <property type="entry name" value="PAPS_reduct"/>
    <property type="match status" value="1"/>
</dbReference>
<dbReference type="PIRSF" id="PIRSF002936">
    <property type="entry name" value="CysDAde_trans"/>
    <property type="match status" value="1"/>
</dbReference>
<dbReference type="SUPFAM" id="SSF52402">
    <property type="entry name" value="Adenine nucleotide alpha hydrolases-like"/>
    <property type="match status" value="1"/>
</dbReference>
<proteinExistence type="inferred from homology"/>
<sequence>MDEKRLTHLRQLEAESIHIIREVAAEFGNPVMLYSIGKDSSVMLHLARKAFFPGTLPFPLLHVDTGWKFSEMYQFRDRTAKEYGFELLVHKNPEGVAMGINPFVHGSAKHTDIMKTEGLKQALNKYGFDAAFGGARRDEEKSRAKERIYSFRDRFHRWDPKNQRPELWHNYNGQINKGESIRVFPLSNWTELDIWQYIFLEKIDIIPLYLAKPRPVVERDGMLLMVDDDRIDLQPGEVISQRMVRFRTLGCWPLTGAVESEAQTLPEIIEEMLVSTTSERQGRMIDRDQSGSMELKKRQGYF</sequence>
<keyword id="KW-0067">ATP-binding</keyword>
<keyword id="KW-0547">Nucleotide-binding</keyword>
<keyword id="KW-0548">Nucleotidyltransferase</keyword>
<keyword id="KW-0808">Transferase</keyword>
<evidence type="ECO:0000255" key="1">
    <source>
        <dbReference type="HAMAP-Rule" id="MF_00064"/>
    </source>
</evidence>
<accession>A8G9Y4</accession>
<organism>
    <name type="scientific">Serratia proteamaculans (strain 568)</name>
    <dbReference type="NCBI Taxonomy" id="399741"/>
    <lineage>
        <taxon>Bacteria</taxon>
        <taxon>Pseudomonadati</taxon>
        <taxon>Pseudomonadota</taxon>
        <taxon>Gammaproteobacteria</taxon>
        <taxon>Enterobacterales</taxon>
        <taxon>Yersiniaceae</taxon>
        <taxon>Serratia</taxon>
    </lineage>
</organism>